<sequence>MESQYNAAAIEQKWQQDWVKQGLDKTPENSNKPKFYALSMFPYPSGNLHMGHVRNYVITDVIARLKRLQGYRVLHPMGWDAFGLPAENAAIDRGIPPAEWTYKNMSQMKQQLQTLGLSIDWEREVATCAPEYYKWTQWLFLQLYQAGLAYQKEAAVNWDPIDQTVLANEQVDSEGYSWRSGAKVERKLLRQWFLKITDYAEQLLTDLDKLPGWPDRVKLMQENWIGKSVGAYLEFPIKGSEEKIAVFTTRPDTVYGVTYVVLAPEHPLTLKVTTPEQKAAVDAFIEEVSNESEIERTAEDKPKRGILTGGTAINPFNGQEIPILIADYVLYEYGTGAVMGVPAHDTRDFKFAKEKQLPIKVVIIPENSDNTNPPLTEAYTDPGIMVNSGIFDGIQSTEGKTAIIEYAEKEGYGKARIQYRLRDWLISRQRYWGCPIPVVHCPSCGTVAVPDADLPVKLPENVEFTGRDASPLAKLEDWINVPCPSCGEPAKRETDTMDTFIDSSWYYLRYTDANNNQEAFNLEKANDWMAIDQYVGGIEHAILHLLYSRFFTKALRDRGLVNIDEPFKRLLTQGMVQGLTYKNPQTGKYVPSENVIFQDDHYRDKETGEILSFFYEKMSKSKYNGVDPKQVLGKYGADTARMFILFKAPPEKDLEWDDADVEGQFRFLNRVWRLVANYLENKPKTVKKASELTKEDKDLRRAIHTAIKEISEDLEGDYQFNTAVSELMKLSNALTDAKCLESGVYQEGIETLLILLAPFAPHIAEELWHNLGYEKSIHLQSWPTVNPDALVVDEITLVIQIMGKTRGTIQVSATATKDELEKLARESEVGQRYLDGQDVKKVIVVPGKLVNFVIAK</sequence>
<comment type="catalytic activity">
    <reaction evidence="1">
        <text>tRNA(Leu) + L-leucine + ATP = L-leucyl-tRNA(Leu) + AMP + diphosphate</text>
        <dbReference type="Rhea" id="RHEA:11688"/>
        <dbReference type="Rhea" id="RHEA-COMP:9613"/>
        <dbReference type="Rhea" id="RHEA-COMP:9622"/>
        <dbReference type="ChEBI" id="CHEBI:30616"/>
        <dbReference type="ChEBI" id="CHEBI:33019"/>
        <dbReference type="ChEBI" id="CHEBI:57427"/>
        <dbReference type="ChEBI" id="CHEBI:78442"/>
        <dbReference type="ChEBI" id="CHEBI:78494"/>
        <dbReference type="ChEBI" id="CHEBI:456215"/>
        <dbReference type="EC" id="6.1.1.4"/>
    </reaction>
</comment>
<comment type="subcellular location">
    <subcellularLocation>
        <location evidence="1">Cytoplasm</location>
    </subcellularLocation>
</comment>
<comment type="similarity">
    <text evidence="1">Belongs to the class-I aminoacyl-tRNA synthetase family.</text>
</comment>
<organism>
    <name type="scientific">Rippkaea orientalis (strain PCC 8801 / RF-1)</name>
    <name type="common">Cyanothece sp. (strain PCC 8801)</name>
    <dbReference type="NCBI Taxonomy" id="41431"/>
    <lineage>
        <taxon>Bacteria</taxon>
        <taxon>Bacillati</taxon>
        <taxon>Cyanobacteriota</taxon>
        <taxon>Cyanophyceae</taxon>
        <taxon>Oscillatoriophycideae</taxon>
        <taxon>Chroococcales</taxon>
        <taxon>Aphanothecaceae</taxon>
        <taxon>Rippkaea</taxon>
        <taxon>Rippkaea orientalis</taxon>
    </lineage>
</organism>
<proteinExistence type="inferred from homology"/>
<name>SYL_RIPO1</name>
<reference key="1">
    <citation type="journal article" date="2011" name="MBio">
        <title>Novel metabolic attributes of the genus Cyanothece, comprising a group of unicellular nitrogen-fixing Cyanobacteria.</title>
        <authorList>
            <person name="Bandyopadhyay A."/>
            <person name="Elvitigala T."/>
            <person name="Welsh E."/>
            <person name="Stockel J."/>
            <person name="Liberton M."/>
            <person name="Min H."/>
            <person name="Sherman L.A."/>
            <person name="Pakrasi H.B."/>
        </authorList>
    </citation>
    <scope>NUCLEOTIDE SEQUENCE [LARGE SCALE GENOMIC DNA]</scope>
    <source>
        <strain>PCC 8801 / RF-1</strain>
    </source>
</reference>
<dbReference type="EC" id="6.1.1.4" evidence="1"/>
<dbReference type="EMBL" id="CP001287">
    <property type="protein sequence ID" value="ACK67211.1"/>
    <property type="molecule type" value="Genomic_DNA"/>
</dbReference>
<dbReference type="RefSeq" id="WP_012596472.1">
    <property type="nucleotide sequence ID" value="NC_011726.1"/>
</dbReference>
<dbReference type="SMR" id="B7JYA9"/>
<dbReference type="STRING" id="41431.PCC8801_3236"/>
<dbReference type="KEGG" id="cyp:PCC8801_3236"/>
<dbReference type="eggNOG" id="COG0495">
    <property type="taxonomic scope" value="Bacteria"/>
</dbReference>
<dbReference type="HOGENOM" id="CLU_004427_0_0_3"/>
<dbReference type="OrthoDB" id="9810365at2"/>
<dbReference type="Proteomes" id="UP000008204">
    <property type="component" value="Chromosome"/>
</dbReference>
<dbReference type="GO" id="GO:0005829">
    <property type="term" value="C:cytosol"/>
    <property type="evidence" value="ECO:0007669"/>
    <property type="project" value="TreeGrafter"/>
</dbReference>
<dbReference type="GO" id="GO:0002161">
    <property type="term" value="F:aminoacyl-tRNA deacylase activity"/>
    <property type="evidence" value="ECO:0007669"/>
    <property type="project" value="InterPro"/>
</dbReference>
<dbReference type="GO" id="GO:0005524">
    <property type="term" value="F:ATP binding"/>
    <property type="evidence" value="ECO:0007669"/>
    <property type="project" value="UniProtKB-UniRule"/>
</dbReference>
<dbReference type="GO" id="GO:0004823">
    <property type="term" value="F:leucine-tRNA ligase activity"/>
    <property type="evidence" value="ECO:0007669"/>
    <property type="project" value="UniProtKB-UniRule"/>
</dbReference>
<dbReference type="GO" id="GO:0006429">
    <property type="term" value="P:leucyl-tRNA aminoacylation"/>
    <property type="evidence" value="ECO:0007669"/>
    <property type="project" value="UniProtKB-UniRule"/>
</dbReference>
<dbReference type="CDD" id="cd07958">
    <property type="entry name" value="Anticodon_Ia_Leu_BEm"/>
    <property type="match status" value="1"/>
</dbReference>
<dbReference type="CDD" id="cd00812">
    <property type="entry name" value="LeuRS_core"/>
    <property type="match status" value="1"/>
</dbReference>
<dbReference type="FunFam" id="3.10.20.590:FF:000001">
    <property type="entry name" value="Leucine--tRNA ligase"/>
    <property type="match status" value="1"/>
</dbReference>
<dbReference type="FunFam" id="3.40.50.620:FF:000003">
    <property type="entry name" value="Leucine--tRNA ligase"/>
    <property type="match status" value="1"/>
</dbReference>
<dbReference type="FunFam" id="1.10.730.10:FF:000011">
    <property type="entry name" value="Leucine--tRNA ligase chloroplastic/mitochondrial"/>
    <property type="match status" value="1"/>
</dbReference>
<dbReference type="FunFam" id="3.40.50.620:FF:000100">
    <property type="entry name" value="probable leucine--tRNA ligase, mitochondrial"/>
    <property type="match status" value="1"/>
</dbReference>
<dbReference type="Gene3D" id="3.40.50.620">
    <property type="entry name" value="HUPs"/>
    <property type="match status" value="2"/>
</dbReference>
<dbReference type="Gene3D" id="1.10.730.10">
    <property type="entry name" value="Isoleucyl-tRNA Synthetase, Domain 1"/>
    <property type="match status" value="1"/>
</dbReference>
<dbReference type="HAMAP" id="MF_00049_B">
    <property type="entry name" value="Leu_tRNA_synth_B"/>
    <property type="match status" value="1"/>
</dbReference>
<dbReference type="InterPro" id="IPR001412">
    <property type="entry name" value="aa-tRNA-synth_I_CS"/>
</dbReference>
<dbReference type="InterPro" id="IPR002300">
    <property type="entry name" value="aa-tRNA-synth_Ia"/>
</dbReference>
<dbReference type="InterPro" id="IPR002302">
    <property type="entry name" value="Leu-tRNA-ligase"/>
</dbReference>
<dbReference type="InterPro" id="IPR025709">
    <property type="entry name" value="Leu_tRNA-synth_edit"/>
</dbReference>
<dbReference type="InterPro" id="IPR013155">
    <property type="entry name" value="M/V/L/I-tRNA-synth_anticd-bd"/>
</dbReference>
<dbReference type="InterPro" id="IPR015413">
    <property type="entry name" value="Methionyl/Leucyl_tRNA_Synth"/>
</dbReference>
<dbReference type="InterPro" id="IPR014729">
    <property type="entry name" value="Rossmann-like_a/b/a_fold"/>
</dbReference>
<dbReference type="InterPro" id="IPR009080">
    <property type="entry name" value="tRNAsynth_Ia_anticodon-bd"/>
</dbReference>
<dbReference type="InterPro" id="IPR009008">
    <property type="entry name" value="Val/Leu/Ile-tRNA-synth_edit"/>
</dbReference>
<dbReference type="NCBIfam" id="TIGR00396">
    <property type="entry name" value="leuS_bact"/>
    <property type="match status" value="1"/>
</dbReference>
<dbReference type="PANTHER" id="PTHR43740:SF2">
    <property type="entry name" value="LEUCINE--TRNA LIGASE, MITOCHONDRIAL"/>
    <property type="match status" value="1"/>
</dbReference>
<dbReference type="PANTHER" id="PTHR43740">
    <property type="entry name" value="LEUCYL-TRNA SYNTHETASE"/>
    <property type="match status" value="1"/>
</dbReference>
<dbReference type="Pfam" id="PF08264">
    <property type="entry name" value="Anticodon_1"/>
    <property type="match status" value="1"/>
</dbReference>
<dbReference type="Pfam" id="PF00133">
    <property type="entry name" value="tRNA-synt_1"/>
    <property type="match status" value="2"/>
</dbReference>
<dbReference type="Pfam" id="PF13603">
    <property type="entry name" value="tRNA-synt_1_2"/>
    <property type="match status" value="1"/>
</dbReference>
<dbReference type="Pfam" id="PF09334">
    <property type="entry name" value="tRNA-synt_1g"/>
    <property type="match status" value="1"/>
</dbReference>
<dbReference type="PRINTS" id="PR00985">
    <property type="entry name" value="TRNASYNTHLEU"/>
</dbReference>
<dbReference type="SUPFAM" id="SSF47323">
    <property type="entry name" value="Anticodon-binding domain of a subclass of class I aminoacyl-tRNA synthetases"/>
    <property type="match status" value="1"/>
</dbReference>
<dbReference type="SUPFAM" id="SSF52374">
    <property type="entry name" value="Nucleotidylyl transferase"/>
    <property type="match status" value="1"/>
</dbReference>
<dbReference type="SUPFAM" id="SSF50677">
    <property type="entry name" value="ValRS/IleRS/LeuRS editing domain"/>
    <property type="match status" value="1"/>
</dbReference>
<dbReference type="PROSITE" id="PS00178">
    <property type="entry name" value="AA_TRNA_LIGASE_I"/>
    <property type="match status" value="1"/>
</dbReference>
<protein>
    <recommendedName>
        <fullName evidence="1">Leucine--tRNA ligase</fullName>
        <ecNumber evidence="1">6.1.1.4</ecNumber>
    </recommendedName>
    <alternativeName>
        <fullName evidence="1">Leucyl-tRNA synthetase</fullName>
        <shortName evidence="1">LeuRS</shortName>
    </alternativeName>
</protein>
<feature type="chain" id="PRO_1000199191" description="Leucine--tRNA ligase">
    <location>
        <begin position="1"/>
        <end position="856"/>
    </location>
</feature>
<feature type="short sequence motif" description="'HIGH' region">
    <location>
        <begin position="42"/>
        <end position="52"/>
    </location>
</feature>
<feature type="short sequence motif" description="'KMSKS' region">
    <location>
        <begin position="617"/>
        <end position="621"/>
    </location>
</feature>
<feature type="binding site" evidence="1">
    <location>
        <position position="620"/>
    </location>
    <ligand>
        <name>ATP</name>
        <dbReference type="ChEBI" id="CHEBI:30616"/>
    </ligand>
</feature>
<keyword id="KW-0030">Aminoacyl-tRNA synthetase</keyword>
<keyword id="KW-0067">ATP-binding</keyword>
<keyword id="KW-0963">Cytoplasm</keyword>
<keyword id="KW-0436">Ligase</keyword>
<keyword id="KW-0547">Nucleotide-binding</keyword>
<keyword id="KW-0648">Protein biosynthesis</keyword>
<keyword id="KW-1185">Reference proteome</keyword>
<accession>B7JYA9</accession>
<evidence type="ECO:0000255" key="1">
    <source>
        <dbReference type="HAMAP-Rule" id="MF_00049"/>
    </source>
</evidence>
<gene>
    <name evidence="1" type="primary">leuS</name>
    <name type="ordered locus">PCC8801_3236</name>
</gene>